<organism>
    <name type="scientific">Escherichia coli (strain K12)</name>
    <dbReference type="NCBI Taxonomy" id="83333"/>
    <lineage>
        <taxon>Bacteria</taxon>
        <taxon>Pseudomonadati</taxon>
        <taxon>Pseudomonadota</taxon>
        <taxon>Gammaproteobacteria</taxon>
        <taxon>Enterobacterales</taxon>
        <taxon>Enterobacteriaceae</taxon>
        <taxon>Escherichia</taxon>
    </lineage>
</organism>
<reference key="1">
    <citation type="journal article" date="1994" name="Microbiol. Rev.">
        <title>Analysis of the sequence and gene products of the transfer region of the F sex factor.</title>
        <authorList>
            <person name="Frost L.S."/>
            <person name="Ippen-Ihler K."/>
            <person name="Skurray R.A."/>
        </authorList>
    </citation>
    <scope>NUCLEOTIDE SEQUENCE [GENOMIC DNA]</scope>
</reference>
<reference key="2">
    <citation type="submission" date="2000-04" db="EMBL/GenBank/DDBJ databases">
        <title>Complete nucleotide sequence of the F plasmid: its implications for organization and diversification of plasmid genomes.</title>
        <authorList>
            <person name="Shimizu H."/>
            <person name="Saitoh Y."/>
            <person name="Suda Y."/>
            <person name="Uehara K."/>
            <person name="Sampei G."/>
            <person name="Mizobuchi K."/>
        </authorList>
    </citation>
    <scope>NUCLEOTIDE SEQUENCE [LARGE SCALE GENOMIC DNA]</scope>
    <source>
        <strain>K12 / CR63</strain>
    </source>
</reference>
<accession>P41070</accession>
<dbReference type="EMBL" id="U01159">
    <property type="protein sequence ID" value="AAC44206.1"/>
    <property type="molecule type" value="Genomic_DNA"/>
</dbReference>
<dbReference type="EMBL" id="AP001918">
    <property type="protein sequence ID" value="BAA97950.1"/>
    <property type="molecule type" value="Genomic_DNA"/>
</dbReference>
<dbReference type="RefSeq" id="NP_061459.1">
    <property type="nucleotide sequence ID" value="NC_002483.1"/>
</dbReference>
<dbReference type="RefSeq" id="WP_001443030.1">
    <property type="nucleotide sequence ID" value="NC_002483.1"/>
</dbReference>
<dbReference type="KEGG" id="ecoc:C3026_24505"/>
<dbReference type="PATRIC" id="fig|83333.107.peg.633"/>
<dbReference type="InterPro" id="IPR024396">
    <property type="entry name" value="Conjug_TrbD_put"/>
</dbReference>
<dbReference type="NCBIfam" id="NF010280">
    <property type="entry name" value="PRK13724.1-2"/>
    <property type="match status" value="1"/>
</dbReference>
<dbReference type="Pfam" id="PF10894">
    <property type="entry name" value="DUF2689"/>
    <property type="match status" value="1"/>
</dbReference>
<name>TRBD_ECOLI</name>
<keyword id="KW-0614">Plasmid</keyword>
<feature type="chain" id="PRO_0000068488" description="Protein TrbD">
    <location>
        <begin position="1"/>
        <end position="65"/>
    </location>
</feature>
<gene>
    <name type="primary">trbD</name>
    <name type="ordered locus">ECOK12F080</name>
</gene>
<sequence length="65" mass="7053">MNMRNINVITVLSVPGKTVSDDFMHAVLSNCATRIVLPAPEKFGSESLPDNFNMTAVGVMKNSEI</sequence>
<geneLocation type="plasmid">
    <name>F</name>
</geneLocation>
<protein>
    <recommendedName>
        <fullName>Protein TrbD</fullName>
    </recommendedName>
</protein>
<proteinExistence type="predicted"/>